<comment type="function">
    <text evidence="1">Part of the ABC transporter complex MetNIQ involved in methionine import. Responsible for energy coupling to the transport system.</text>
</comment>
<comment type="catalytic activity">
    <reaction evidence="1">
        <text>L-methionine(out) + ATP + H2O = L-methionine(in) + ADP + phosphate + H(+)</text>
        <dbReference type="Rhea" id="RHEA:29779"/>
        <dbReference type="ChEBI" id="CHEBI:15377"/>
        <dbReference type="ChEBI" id="CHEBI:15378"/>
        <dbReference type="ChEBI" id="CHEBI:30616"/>
        <dbReference type="ChEBI" id="CHEBI:43474"/>
        <dbReference type="ChEBI" id="CHEBI:57844"/>
        <dbReference type="ChEBI" id="CHEBI:456216"/>
        <dbReference type="EC" id="7.4.2.11"/>
    </reaction>
</comment>
<comment type="catalytic activity">
    <reaction evidence="1">
        <text>D-methionine(out) + ATP + H2O = D-methionine(in) + ADP + phosphate + H(+)</text>
        <dbReference type="Rhea" id="RHEA:29767"/>
        <dbReference type="ChEBI" id="CHEBI:15377"/>
        <dbReference type="ChEBI" id="CHEBI:15378"/>
        <dbReference type="ChEBI" id="CHEBI:30616"/>
        <dbReference type="ChEBI" id="CHEBI:43474"/>
        <dbReference type="ChEBI" id="CHEBI:57932"/>
        <dbReference type="ChEBI" id="CHEBI:456216"/>
        <dbReference type="EC" id="7.4.2.11"/>
    </reaction>
</comment>
<comment type="subunit">
    <text evidence="1">The complex is composed of two ATP-binding proteins (MetN), two transmembrane proteins (MetI) and a solute-binding protein (MetQ).</text>
</comment>
<comment type="subcellular location">
    <subcellularLocation>
        <location evidence="1">Cell inner membrane</location>
        <topology evidence="1">Peripheral membrane protein</topology>
    </subcellularLocation>
</comment>
<comment type="similarity">
    <text evidence="1">Belongs to the ABC transporter superfamily. Methionine importer (TC 3.A.1.24) family.</text>
</comment>
<comment type="sequence caution" evidence="2">
    <conflict type="erroneous initiation">
        <sequence resource="EMBL-CDS" id="ABA53111"/>
    </conflict>
</comment>
<sequence>MAQLLDSPGFIERSAAVPHKAAAAPATRDAAAPAAVPGAAVSFELVGKVFDGPRGPAAALREVTLDIARGGVFGVIGRSGAGKSTLLRLVNGLERPTSGAVRVNGVDVGTLDERGLVALRRRIGMVFQHFNLLSAKTVAQNIGLPLKIAGVPKAERARKVDALLDLVGLAAKRDAYPASLSGGQKQRVGIARALVHDPALLLCDEATSALDPETTQSILALLADINRRLGLTIMLITHEMEVIRAVCDTVAVVEQGEVVETGPVWRVFGDPRHGATRALLRTLAHDLPADLAARLRPLDGAAPLPCGAQLLLDVRYTGASGGEPDLGALTAALARNVGDAVHFVHGGLDRIQGRVQGRLVIAASLAARGAASPDRIAAALAAARRHANRVEVLGYV</sequence>
<accession>Q3JHC9</accession>
<name>METN2_BURP1</name>
<proteinExistence type="inferred from homology"/>
<evidence type="ECO:0000255" key="1">
    <source>
        <dbReference type="HAMAP-Rule" id="MF_01719"/>
    </source>
</evidence>
<evidence type="ECO:0000305" key="2"/>
<keyword id="KW-0029">Amino-acid transport</keyword>
<keyword id="KW-0067">ATP-binding</keyword>
<keyword id="KW-0997">Cell inner membrane</keyword>
<keyword id="KW-1003">Cell membrane</keyword>
<keyword id="KW-0472">Membrane</keyword>
<keyword id="KW-0547">Nucleotide-binding</keyword>
<keyword id="KW-1278">Translocase</keyword>
<keyword id="KW-0813">Transport</keyword>
<organism>
    <name type="scientific">Burkholderia pseudomallei (strain 1710b)</name>
    <dbReference type="NCBI Taxonomy" id="320372"/>
    <lineage>
        <taxon>Bacteria</taxon>
        <taxon>Pseudomonadati</taxon>
        <taxon>Pseudomonadota</taxon>
        <taxon>Betaproteobacteria</taxon>
        <taxon>Burkholderiales</taxon>
        <taxon>Burkholderiaceae</taxon>
        <taxon>Burkholderia</taxon>
        <taxon>pseudomallei group</taxon>
    </lineage>
</organism>
<gene>
    <name evidence="1" type="primary">metN2</name>
    <name type="ordered locus">BURPS1710b_A1867</name>
</gene>
<protein>
    <recommendedName>
        <fullName evidence="1">Methionine import ATP-binding protein MetN 2</fullName>
        <ecNumber evidence="1">7.4.2.11</ecNumber>
    </recommendedName>
</protein>
<dbReference type="EC" id="7.4.2.11" evidence="1"/>
<dbReference type="EMBL" id="CP000125">
    <property type="protein sequence ID" value="ABA53111.1"/>
    <property type="status" value="ALT_INIT"/>
    <property type="molecule type" value="Genomic_DNA"/>
</dbReference>
<dbReference type="SMR" id="Q3JHC9"/>
<dbReference type="EnsemblBacteria" id="ABA53111">
    <property type="protein sequence ID" value="ABA53111"/>
    <property type="gene ID" value="BURPS1710b_A1867"/>
</dbReference>
<dbReference type="KEGG" id="bpm:BURPS1710b_A1867"/>
<dbReference type="HOGENOM" id="CLU_000604_1_3_4"/>
<dbReference type="Proteomes" id="UP000002700">
    <property type="component" value="Chromosome II"/>
</dbReference>
<dbReference type="GO" id="GO:0005886">
    <property type="term" value="C:plasma membrane"/>
    <property type="evidence" value="ECO:0007669"/>
    <property type="project" value="UniProtKB-SubCell"/>
</dbReference>
<dbReference type="GO" id="GO:0033232">
    <property type="term" value="F:ABC-type D-methionine transporter activity"/>
    <property type="evidence" value="ECO:0007669"/>
    <property type="project" value="UniProtKB-EC"/>
</dbReference>
<dbReference type="GO" id="GO:0005524">
    <property type="term" value="F:ATP binding"/>
    <property type="evidence" value="ECO:0007669"/>
    <property type="project" value="UniProtKB-KW"/>
</dbReference>
<dbReference type="GO" id="GO:0016887">
    <property type="term" value="F:ATP hydrolysis activity"/>
    <property type="evidence" value="ECO:0007669"/>
    <property type="project" value="InterPro"/>
</dbReference>
<dbReference type="CDD" id="cd03258">
    <property type="entry name" value="ABC_MetN_methionine_transporter"/>
    <property type="match status" value="1"/>
</dbReference>
<dbReference type="FunFam" id="3.40.50.300:FF:000056">
    <property type="entry name" value="Cell division ATP-binding protein FtsE"/>
    <property type="match status" value="1"/>
</dbReference>
<dbReference type="Gene3D" id="3.40.50.300">
    <property type="entry name" value="P-loop containing nucleotide triphosphate hydrolases"/>
    <property type="match status" value="1"/>
</dbReference>
<dbReference type="InterPro" id="IPR003593">
    <property type="entry name" value="AAA+_ATPase"/>
</dbReference>
<dbReference type="InterPro" id="IPR003439">
    <property type="entry name" value="ABC_transporter-like_ATP-bd"/>
</dbReference>
<dbReference type="InterPro" id="IPR017871">
    <property type="entry name" value="ABC_transporter-like_CS"/>
</dbReference>
<dbReference type="InterPro" id="IPR045865">
    <property type="entry name" value="ACT-like_dom_sf"/>
</dbReference>
<dbReference type="InterPro" id="IPR041701">
    <property type="entry name" value="MetN_ABC"/>
</dbReference>
<dbReference type="InterPro" id="IPR050086">
    <property type="entry name" value="MetN_ABC_transporter-like"/>
</dbReference>
<dbReference type="InterPro" id="IPR018449">
    <property type="entry name" value="NIL_domain"/>
</dbReference>
<dbReference type="InterPro" id="IPR027417">
    <property type="entry name" value="P-loop_NTPase"/>
</dbReference>
<dbReference type="PANTHER" id="PTHR43166">
    <property type="entry name" value="AMINO ACID IMPORT ATP-BINDING PROTEIN"/>
    <property type="match status" value="1"/>
</dbReference>
<dbReference type="PANTHER" id="PTHR43166:SF30">
    <property type="entry name" value="METHIONINE IMPORT ATP-BINDING PROTEIN METN"/>
    <property type="match status" value="1"/>
</dbReference>
<dbReference type="Pfam" id="PF00005">
    <property type="entry name" value="ABC_tran"/>
    <property type="match status" value="1"/>
</dbReference>
<dbReference type="Pfam" id="PF09383">
    <property type="entry name" value="NIL"/>
    <property type="match status" value="1"/>
</dbReference>
<dbReference type="SMART" id="SM00382">
    <property type="entry name" value="AAA"/>
    <property type="match status" value="1"/>
</dbReference>
<dbReference type="SMART" id="SM00930">
    <property type="entry name" value="NIL"/>
    <property type="match status" value="1"/>
</dbReference>
<dbReference type="SUPFAM" id="SSF55021">
    <property type="entry name" value="ACT-like"/>
    <property type="match status" value="1"/>
</dbReference>
<dbReference type="SUPFAM" id="SSF52540">
    <property type="entry name" value="P-loop containing nucleoside triphosphate hydrolases"/>
    <property type="match status" value="1"/>
</dbReference>
<dbReference type="PROSITE" id="PS00211">
    <property type="entry name" value="ABC_TRANSPORTER_1"/>
    <property type="match status" value="1"/>
</dbReference>
<dbReference type="PROSITE" id="PS50893">
    <property type="entry name" value="ABC_TRANSPORTER_2"/>
    <property type="match status" value="1"/>
</dbReference>
<dbReference type="PROSITE" id="PS51264">
    <property type="entry name" value="METN"/>
    <property type="match status" value="1"/>
</dbReference>
<feature type="chain" id="PRO_0000270268" description="Methionine import ATP-binding protein MetN 2">
    <location>
        <begin position="1"/>
        <end position="396"/>
    </location>
</feature>
<feature type="domain" description="ABC transporter" evidence="1">
    <location>
        <begin position="41"/>
        <end position="280"/>
    </location>
</feature>
<feature type="binding site" evidence="1">
    <location>
        <begin position="77"/>
        <end position="84"/>
    </location>
    <ligand>
        <name>ATP</name>
        <dbReference type="ChEBI" id="CHEBI:30616"/>
    </ligand>
</feature>
<reference key="1">
    <citation type="journal article" date="2010" name="Genome Biol. Evol.">
        <title>Continuing evolution of Burkholderia mallei through genome reduction and large-scale rearrangements.</title>
        <authorList>
            <person name="Losada L."/>
            <person name="Ronning C.M."/>
            <person name="DeShazer D."/>
            <person name="Woods D."/>
            <person name="Fedorova N."/>
            <person name="Kim H.S."/>
            <person name="Shabalina S.A."/>
            <person name="Pearson T.R."/>
            <person name="Brinkac L."/>
            <person name="Tan P."/>
            <person name="Nandi T."/>
            <person name="Crabtree J."/>
            <person name="Badger J."/>
            <person name="Beckstrom-Sternberg S."/>
            <person name="Saqib M."/>
            <person name="Schutzer S.E."/>
            <person name="Keim P."/>
            <person name="Nierman W.C."/>
        </authorList>
    </citation>
    <scope>NUCLEOTIDE SEQUENCE [LARGE SCALE GENOMIC DNA]</scope>
    <source>
        <strain>1710b</strain>
    </source>
</reference>